<keyword id="KW-0574">Periplasm</keyword>
<keyword id="KW-0732">Signal</keyword>
<keyword id="KW-0813">Transport</keyword>
<name>UGPB_YERPN</name>
<comment type="function">
    <text evidence="1">Part of the ABC transporter complex UgpBAEC involved in sn-glycerol-3-phosphate (G3P) import. Binds G3P.</text>
</comment>
<comment type="subunit">
    <text evidence="1">The complex is composed of two ATP-binding proteins (UgpC), two transmembrane proteins (UgpA and UgpE) and a solute-binding protein (UgpB).</text>
</comment>
<comment type="subcellular location">
    <subcellularLocation>
        <location evidence="1">Periplasm</location>
    </subcellularLocation>
</comment>
<comment type="similarity">
    <text evidence="3">Belongs to the bacterial solute-binding protein 1 family.</text>
</comment>
<evidence type="ECO:0000250" key="1">
    <source>
        <dbReference type="UniProtKB" id="P0AG80"/>
    </source>
</evidence>
<evidence type="ECO:0000255" key="2"/>
<evidence type="ECO:0000305" key="3"/>
<gene>
    <name type="primary">ugpB</name>
    <name type="ordered locus">YPN_0168</name>
    <name type="ORF">YP516_0133</name>
</gene>
<sequence length="439" mass="48574">MFNNSIHKVSICIALTLTFSANAMAVTEIPFWHSMEGELGKEVDSIADRFNQSQPDYKIVPVYKGNYEQSLAAGIAAFRSGKAPAILQVYEVGTATMMASKAIKPVYQVFKDANIDFDESVFVPTVAGYYTDSKTGRLLSQPFNSSTPVLYYNKEAFKKAGLDPEQPPKTWQELAADTAKLRAAGSSCGYASGWQGWIQIENFSAWHGQPIASRNNGFDGTDAVLEFNKPLQVKHIQLLSDMNKKGDFTYFGRKDESTSKFYNGDCAITTASSGSLASIRHYAKFNFGVGMMPYDADAKNAPQNAIIGGASLWVMDGKDKETYKGVAEFLQYLVKPEIAAEWHQKTGYLPITTAAYELTKQQGFYEQNPGADVATRQMLNKPPLPYTKGLRLGNMPQIRTVVDEELEAVWTAKKTPQAALDNSVKRGDVLLRRFEQANK</sequence>
<dbReference type="EMBL" id="CP000305">
    <property type="protein sequence ID" value="ABG16501.1"/>
    <property type="molecule type" value="Genomic_DNA"/>
</dbReference>
<dbReference type="EMBL" id="ACNQ01000001">
    <property type="protein sequence ID" value="EEO78614.1"/>
    <property type="molecule type" value="Genomic_DNA"/>
</dbReference>
<dbReference type="RefSeq" id="WP_002211520.1">
    <property type="nucleotide sequence ID" value="NZ_ACNQ01000001.1"/>
</dbReference>
<dbReference type="SMR" id="Q1CNC9"/>
<dbReference type="GeneID" id="57974912"/>
<dbReference type="KEGG" id="ypn:YPN_0168"/>
<dbReference type="HOGENOM" id="CLU_031285_3_0_6"/>
<dbReference type="Proteomes" id="UP000008936">
    <property type="component" value="Chromosome"/>
</dbReference>
<dbReference type="GO" id="GO:0030313">
    <property type="term" value="C:cell envelope"/>
    <property type="evidence" value="ECO:0007669"/>
    <property type="project" value="UniProtKB-ARBA"/>
</dbReference>
<dbReference type="GO" id="GO:0042597">
    <property type="term" value="C:periplasmic space"/>
    <property type="evidence" value="ECO:0007669"/>
    <property type="project" value="UniProtKB-SubCell"/>
</dbReference>
<dbReference type="GO" id="GO:0055085">
    <property type="term" value="P:transmembrane transport"/>
    <property type="evidence" value="ECO:0007669"/>
    <property type="project" value="InterPro"/>
</dbReference>
<dbReference type="CDD" id="cd14748">
    <property type="entry name" value="PBP2_UgpB"/>
    <property type="match status" value="1"/>
</dbReference>
<dbReference type="Gene3D" id="3.40.190.10">
    <property type="entry name" value="Periplasmic binding protein-like II"/>
    <property type="match status" value="2"/>
</dbReference>
<dbReference type="InterPro" id="IPR050490">
    <property type="entry name" value="Bact_solute-bd_prot1"/>
</dbReference>
<dbReference type="InterPro" id="IPR006059">
    <property type="entry name" value="SBP"/>
</dbReference>
<dbReference type="InterPro" id="IPR006061">
    <property type="entry name" value="SBP_1_CS"/>
</dbReference>
<dbReference type="NCBIfam" id="NF008211">
    <property type="entry name" value="PRK10974.1"/>
    <property type="match status" value="1"/>
</dbReference>
<dbReference type="PANTHER" id="PTHR43649">
    <property type="entry name" value="ARABINOSE-BINDING PROTEIN-RELATED"/>
    <property type="match status" value="1"/>
</dbReference>
<dbReference type="PANTHER" id="PTHR43649:SF31">
    <property type="entry name" value="SN-GLYCEROL-3-PHOSPHATE-BINDING PERIPLASMIC PROTEIN UGPB"/>
    <property type="match status" value="1"/>
</dbReference>
<dbReference type="Pfam" id="PF13416">
    <property type="entry name" value="SBP_bac_8"/>
    <property type="match status" value="1"/>
</dbReference>
<dbReference type="SUPFAM" id="SSF53850">
    <property type="entry name" value="Periplasmic binding protein-like II"/>
    <property type="match status" value="1"/>
</dbReference>
<dbReference type="PROSITE" id="PS01037">
    <property type="entry name" value="SBP_BACTERIAL_1"/>
    <property type="match status" value="1"/>
</dbReference>
<organism>
    <name type="scientific">Yersinia pestis bv. Antiqua (strain Nepal516)</name>
    <dbReference type="NCBI Taxonomy" id="377628"/>
    <lineage>
        <taxon>Bacteria</taxon>
        <taxon>Pseudomonadati</taxon>
        <taxon>Pseudomonadota</taxon>
        <taxon>Gammaproteobacteria</taxon>
        <taxon>Enterobacterales</taxon>
        <taxon>Yersiniaceae</taxon>
        <taxon>Yersinia</taxon>
    </lineage>
</organism>
<feature type="signal peptide" evidence="2">
    <location>
        <begin position="1"/>
        <end position="25"/>
    </location>
</feature>
<feature type="chain" id="PRO_5000115061" description="sn-glycerol-3-phosphate-binding periplasmic protein UgpB">
    <location>
        <begin position="26"/>
        <end position="439"/>
    </location>
</feature>
<feature type="binding site" evidence="1">
    <location>
        <position position="67"/>
    </location>
    <ligand>
        <name>sn-glycerol 3-phosphate</name>
        <dbReference type="ChEBI" id="CHEBI:57597"/>
    </ligand>
</feature>
<feature type="binding site" evidence="1">
    <location>
        <position position="91"/>
    </location>
    <ligand>
        <name>sn-glycerol 3-phosphate</name>
        <dbReference type="ChEBI" id="CHEBI:57597"/>
    </ligand>
</feature>
<feature type="binding site" evidence="1">
    <location>
        <position position="146"/>
    </location>
    <ligand>
        <name>sn-glycerol 3-phosphate</name>
        <dbReference type="ChEBI" id="CHEBI:57597"/>
    </ligand>
</feature>
<feature type="binding site" evidence="1">
    <location>
        <position position="272"/>
    </location>
    <ligand>
        <name>sn-glycerol 3-phosphate</name>
        <dbReference type="ChEBI" id="CHEBI:57597"/>
    </ligand>
</feature>
<feature type="binding site" evidence="1">
    <location>
        <position position="309"/>
    </location>
    <ligand>
        <name>sn-glycerol 3-phosphate</name>
        <dbReference type="ChEBI" id="CHEBI:57597"/>
    </ligand>
</feature>
<feature type="binding site" evidence="1">
    <location>
        <position position="348"/>
    </location>
    <ligand>
        <name>sn-glycerol 3-phosphate</name>
        <dbReference type="ChEBI" id="CHEBI:57597"/>
    </ligand>
</feature>
<feature type="binding site" evidence="1">
    <location>
        <position position="399"/>
    </location>
    <ligand>
        <name>sn-glycerol 3-phosphate</name>
        <dbReference type="ChEBI" id="CHEBI:57597"/>
    </ligand>
</feature>
<reference key="1">
    <citation type="journal article" date="2006" name="J. Bacteriol.">
        <title>Complete genome sequence of Yersinia pestis strains Antiqua and Nepal516: evidence of gene reduction in an emerging pathogen.</title>
        <authorList>
            <person name="Chain P.S.G."/>
            <person name="Hu P."/>
            <person name="Malfatti S.A."/>
            <person name="Radnedge L."/>
            <person name="Larimer F."/>
            <person name="Vergez L.M."/>
            <person name="Worsham P."/>
            <person name="Chu M.C."/>
            <person name="Andersen G.L."/>
        </authorList>
    </citation>
    <scope>NUCLEOTIDE SEQUENCE [LARGE SCALE GENOMIC DNA]</scope>
    <source>
        <strain>Nepal516</strain>
    </source>
</reference>
<reference key="2">
    <citation type="submission" date="2009-04" db="EMBL/GenBank/DDBJ databases">
        <title>Yersinia pestis Nepal516A whole genome shotgun sequencing project.</title>
        <authorList>
            <person name="Plunkett G. III"/>
            <person name="Anderson B.D."/>
            <person name="Baumler D.J."/>
            <person name="Burland V."/>
            <person name="Cabot E.L."/>
            <person name="Glasner J.D."/>
            <person name="Mau B."/>
            <person name="Neeno-Eckwall E."/>
            <person name="Perna N.T."/>
            <person name="Munk A.C."/>
            <person name="Tapia R."/>
            <person name="Green L.D."/>
            <person name="Rogers Y.C."/>
            <person name="Detter J.C."/>
            <person name="Bruce D.C."/>
            <person name="Brettin T.S."/>
        </authorList>
    </citation>
    <scope>NUCLEOTIDE SEQUENCE [LARGE SCALE GENOMIC DNA]</scope>
    <source>
        <strain>Nepal516</strain>
    </source>
</reference>
<proteinExistence type="inferred from homology"/>
<accession>Q1CNC9</accession>
<accession>D1Q160</accession>
<protein>
    <recommendedName>
        <fullName evidence="1">sn-glycerol-3-phosphate-binding periplasmic protein UgpB</fullName>
    </recommendedName>
</protein>